<proteinExistence type="inferred from homology"/>
<gene>
    <name evidence="1" type="primary">atpD</name>
    <name type="ordered locus">HI_0479</name>
</gene>
<evidence type="ECO:0000255" key="1">
    <source>
        <dbReference type="HAMAP-Rule" id="MF_01347"/>
    </source>
</evidence>
<reference key="1">
    <citation type="journal article" date="1995" name="Science">
        <title>Whole-genome random sequencing and assembly of Haemophilus influenzae Rd.</title>
        <authorList>
            <person name="Fleischmann R.D."/>
            <person name="Adams M.D."/>
            <person name="White O."/>
            <person name="Clayton R.A."/>
            <person name="Kirkness E.F."/>
            <person name="Kerlavage A.R."/>
            <person name="Bult C.J."/>
            <person name="Tomb J.-F."/>
            <person name="Dougherty B.A."/>
            <person name="Merrick J.M."/>
            <person name="McKenney K."/>
            <person name="Sutton G.G."/>
            <person name="FitzHugh W."/>
            <person name="Fields C.A."/>
            <person name="Gocayne J.D."/>
            <person name="Scott J.D."/>
            <person name="Shirley R."/>
            <person name="Liu L.-I."/>
            <person name="Glodek A."/>
            <person name="Kelley J.M."/>
            <person name="Weidman J.F."/>
            <person name="Phillips C.A."/>
            <person name="Spriggs T."/>
            <person name="Hedblom E."/>
            <person name="Cotton M.D."/>
            <person name="Utterback T.R."/>
            <person name="Hanna M.C."/>
            <person name="Nguyen D.T."/>
            <person name="Saudek D.M."/>
            <person name="Brandon R.C."/>
            <person name="Fine L.D."/>
            <person name="Fritchman J.L."/>
            <person name="Fuhrmann J.L."/>
            <person name="Geoghagen N.S.M."/>
            <person name="Gnehm C.L."/>
            <person name="McDonald L.A."/>
            <person name="Small K.V."/>
            <person name="Fraser C.M."/>
            <person name="Smith H.O."/>
            <person name="Venter J.C."/>
        </authorList>
    </citation>
    <scope>NUCLEOTIDE SEQUENCE [LARGE SCALE GENOMIC DNA]</scope>
    <source>
        <strain>ATCC 51907 / DSM 11121 / KW20 / Rd</strain>
    </source>
</reference>
<reference key="2">
    <citation type="submission" date="1996-09" db="EMBL/GenBank/DDBJ databases">
        <authorList>
            <person name="White O."/>
            <person name="Clayton R.A."/>
            <person name="Kerlavage A.R."/>
            <person name="Fleischmann R.D."/>
        </authorList>
    </citation>
    <scope>SEQUENCE REVISION</scope>
</reference>
<accession>P43715</accession>
<comment type="function">
    <text evidence="1">Produces ATP from ADP in the presence of a proton gradient across the membrane. The catalytic sites are hosted primarily by the beta subunits.</text>
</comment>
<comment type="catalytic activity">
    <reaction evidence="1">
        <text>ATP + H2O + 4 H(+)(in) = ADP + phosphate + 5 H(+)(out)</text>
        <dbReference type="Rhea" id="RHEA:57720"/>
        <dbReference type="ChEBI" id="CHEBI:15377"/>
        <dbReference type="ChEBI" id="CHEBI:15378"/>
        <dbReference type="ChEBI" id="CHEBI:30616"/>
        <dbReference type="ChEBI" id="CHEBI:43474"/>
        <dbReference type="ChEBI" id="CHEBI:456216"/>
        <dbReference type="EC" id="7.1.2.2"/>
    </reaction>
</comment>
<comment type="subunit">
    <text evidence="1">F-type ATPases have 2 components, CF(1) - the catalytic core - and CF(0) - the membrane proton channel. CF(1) has five subunits: alpha(3), beta(3), gamma(1), delta(1), epsilon(1). CF(0) has three main subunits: a(1), b(2) and c(9-12). The alpha and beta chains form an alternating ring which encloses part of the gamma chain. CF(1) is attached to CF(0) by a central stalk formed by the gamma and epsilon chains, while a peripheral stalk is formed by the delta and b chains.</text>
</comment>
<comment type="subcellular location">
    <subcellularLocation>
        <location evidence="1">Cell inner membrane</location>
        <topology evidence="1">Peripheral membrane protein</topology>
    </subcellularLocation>
</comment>
<comment type="similarity">
    <text evidence="1">Belongs to the ATPase alpha/beta chains family.</text>
</comment>
<name>ATPB_HAEIN</name>
<feature type="chain" id="PRO_0000144443" description="ATP synthase subunit beta">
    <location>
        <begin position="1"/>
        <end position="457"/>
    </location>
</feature>
<feature type="binding site" evidence="1">
    <location>
        <begin position="147"/>
        <end position="154"/>
    </location>
    <ligand>
        <name>ATP</name>
        <dbReference type="ChEBI" id="CHEBI:30616"/>
    </ligand>
</feature>
<keyword id="KW-0066">ATP synthesis</keyword>
<keyword id="KW-0067">ATP-binding</keyword>
<keyword id="KW-0997">Cell inner membrane</keyword>
<keyword id="KW-1003">Cell membrane</keyword>
<keyword id="KW-0139">CF(1)</keyword>
<keyword id="KW-0375">Hydrogen ion transport</keyword>
<keyword id="KW-0406">Ion transport</keyword>
<keyword id="KW-0472">Membrane</keyword>
<keyword id="KW-0547">Nucleotide-binding</keyword>
<keyword id="KW-1185">Reference proteome</keyword>
<keyword id="KW-1278">Translocase</keyword>
<keyword id="KW-0813">Transport</keyword>
<protein>
    <recommendedName>
        <fullName evidence="1">ATP synthase subunit beta</fullName>
        <ecNumber evidence="1">7.1.2.2</ecNumber>
    </recommendedName>
    <alternativeName>
        <fullName evidence="1">ATP synthase F1 sector subunit beta</fullName>
    </alternativeName>
    <alternativeName>
        <fullName evidence="1">F-ATPase subunit beta</fullName>
    </alternativeName>
</protein>
<organism>
    <name type="scientific">Haemophilus influenzae (strain ATCC 51907 / DSM 11121 / KW20 / Rd)</name>
    <dbReference type="NCBI Taxonomy" id="71421"/>
    <lineage>
        <taxon>Bacteria</taxon>
        <taxon>Pseudomonadati</taxon>
        <taxon>Pseudomonadota</taxon>
        <taxon>Gammaproteobacteria</taxon>
        <taxon>Pasteurellales</taxon>
        <taxon>Pasteurellaceae</taxon>
        <taxon>Haemophilus</taxon>
    </lineage>
</organism>
<sequence>MSAGKIVQIIGAVIDVEFPQDAVPKVYDALKVESGLTLEVQQQLGGGVVRCIALGTSDGLKRGLKVENTNNPIQVPVGTKTLGRIMNVLGEPIDEQGAIGEEERWAIHRSAPSYEEQSNSTELLETGIKVIDLICPFAKGGKVGLFGGAGVGKTVNMMELIRNIAIEHSGYSVFAGVGERTREGNDFYHEMKDSNVLDKVSLVYGQMNEPPGNRLRVALTGLTMAEKFRDEGRDVLFFVDNIYRYTLAGTEVSALLGRMPSAVGYQPTLAEEMGVLQERITSTKTGSITSVQAVYVPADDLTDPSPATTFAHLDSTVVLSRQIASLGIYPAVDPLDSTSRQLDPLVVGQEHYDVARGVQGILQRYKELKDIIAILGMDELSEEDKLVVARARKIERFLSQPFFVAEVFTGSPGKYVTLKDTIRGFKGILDGEYDHIPEQAFYMVGSIDEVLEKAKNM</sequence>
<dbReference type="EC" id="7.1.2.2" evidence="1"/>
<dbReference type="EMBL" id="L42023">
    <property type="protein sequence ID" value="AAC22137.1"/>
    <property type="molecule type" value="Genomic_DNA"/>
</dbReference>
<dbReference type="RefSeq" id="NP_438639.1">
    <property type="nucleotide sequence ID" value="NC_000907.1"/>
</dbReference>
<dbReference type="SMR" id="P43715"/>
<dbReference type="STRING" id="71421.HI_0479"/>
<dbReference type="EnsemblBacteria" id="AAC22137">
    <property type="protein sequence ID" value="AAC22137"/>
    <property type="gene ID" value="HI_0479"/>
</dbReference>
<dbReference type="KEGG" id="hin:HI_0479"/>
<dbReference type="PATRIC" id="fig|71421.8.peg.498"/>
<dbReference type="eggNOG" id="COG0055">
    <property type="taxonomic scope" value="Bacteria"/>
</dbReference>
<dbReference type="HOGENOM" id="CLU_022398_0_2_6"/>
<dbReference type="OrthoDB" id="9801639at2"/>
<dbReference type="PhylomeDB" id="P43715"/>
<dbReference type="BioCyc" id="HINF71421:G1GJ1-494-MONOMER"/>
<dbReference type="Proteomes" id="UP000000579">
    <property type="component" value="Chromosome"/>
</dbReference>
<dbReference type="GO" id="GO:0005886">
    <property type="term" value="C:plasma membrane"/>
    <property type="evidence" value="ECO:0007669"/>
    <property type="project" value="UniProtKB-SubCell"/>
</dbReference>
<dbReference type="GO" id="GO:0045259">
    <property type="term" value="C:proton-transporting ATP synthase complex"/>
    <property type="evidence" value="ECO:0007669"/>
    <property type="project" value="UniProtKB-KW"/>
</dbReference>
<dbReference type="GO" id="GO:0005524">
    <property type="term" value="F:ATP binding"/>
    <property type="evidence" value="ECO:0007669"/>
    <property type="project" value="UniProtKB-UniRule"/>
</dbReference>
<dbReference type="GO" id="GO:0016887">
    <property type="term" value="F:ATP hydrolysis activity"/>
    <property type="evidence" value="ECO:0007669"/>
    <property type="project" value="InterPro"/>
</dbReference>
<dbReference type="GO" id="GO:0046933">
    <property type="term" value="F:proton-transporting ATP synthase activity, rotational mechanism"/>
    <property type="evidence" value="ECO:0007669"/>
    <property type="project" value="UniProtKB-UniRule"/>
</dbReference>
<dbReference type="CDD" id="cd18110">
    <property type="entry name" value="ATP-synt_F1_beta_C"/>
    <property type="match status" value="1"/>
</dbReference>
<dbReference type="CDD" id="cd18115">
    <property type="entry name" value="ATP-synt_F1_beta_N"/>
    <property type="match status" value="1"/>
</dbReference>
<dbReference type="CDD" id="cd01133">
    <property type="entry name" value="F1-ATPase_beta_CD"/>
    <property type="match status" value="1"/>
</dbReference>
<dbReference type="FunFam" id="1.10.1140.10:FF:000001">
    <property type="entry name" value="ATP synthase subunit beta"/>
    <property type="match status" value="1"/>
</dbReference>
<dbReference type="FunFam" id="2.40.10.170:FF:000003">
    <property type="entry name" value="ATP synthase subunit beta"/>
    <property type="match status" value="1"/>
</dbReference>
<dbReference type="FunFam" id="3.40.50.300:FF:000004">
    <property type="entry name" value="ATP synthase subunit beta"/>
    <property type="match status" value="1"/>
</dbReference>
<dbReference type="Gene3D" id="2.40.10.170">
    <property type="match status" value="1"/>
</dbReference>
<dbReference type="Gene3D" id="1.10.1140.10">
    <property type="entry name" value="Bovine Mitochondrial F1-atpase, Atp Synthase Beta Chain, Chain D, domain 3"/>
    <property type="match status" value="1"/>
</dbReference>
<dbReference type="Gene3D" id="3.40.50.300">
    <property type="entry name" value="P-loop containing nucleotide triphosphate hydrolases"/>
    <property type="match status" value="1"/>
</dbReference>
<dbReference type="HAMAP" id="MF_01347">
    <property type="entry name" value="ATP_synth_beta_bact"/>
    <property type="match status" value="1"/>
</dbReference>
<dbReference type="InterPro" id="IPR003593">
    <property type="entry name" value="AAA+_ATPase"/>
</dbReference>
<dbReference type="InterPro" id="IPR055190">
    <property type="entry name" value="ATP-synt_VA_C"/>
</dbReference>
<dbReference type="InterPro" id="IPR005722">
    <property type="entry name" value="ATP_synth_F1_bsu"/>
</dbReference>
<dbReference type="InterPro" id="IPR020003">
    <property type="entry name" value="ATPase_a/bsu_AS"/>
</dbReference>
<dbReference type="InterPro" id="IPR050053">
    <property type="entry name" value="ATPase_alpha/beta_chains"/>
</dbReference>
<dbReference type="InterPro" id="IPR004100">
    <property type="entry name" value="ATPase_F1/V1/A1_a/bsu_N"/>
</dbReference>
<dbReference type="InterPro" id="IPR036121">
    <property type="entry name" value="ATPase_F1/V1/A1_a/bsu_N_sf"/>
</dbReference>
<dbReference type="InterPro" id="IPR000194">
    <property type="entry name" value="ATPase_F1/V1/A1_a/bsu_nucl-bd"/>
</dbReference>
<dbReference type="InterPro" id="IPR024034">
    <property type="entry name" value="ATPase_F1/V1_b/a_C"/>
</dbReference>
<dbReference type="InterPro" id="IPR027417">
    <property type="entry name" value="P-loop_NTPase"/>
</dbReference>
<dbReference type="NCBIfam" id="TIGR01039">
    <property type="entry name" value="atpD"/>
    <property type="match status" value="1"/>
</dbReference>
<dbReference type="PANTHER" id="PTHR15184">
    <property type="entry name" value="ATP SYNTHASE"/>
    <property type="match status" value="1"/>
</dbReference>
<dbReference type="PANTHER" id="PTHR15184:SF71">
    <property type="entry name" value="ATP SYNTHASE SUBUNIT BETA, MITOCHONDRIAL"/>
    <property type="match status" value="1"/>
</dbReference>
<dbReference type="Pfam" id="PF00006">
    <property type="entry name" value="ATP-synt_ab"/>
    <property type="match status" value="1"/>
</dbReference>
<dbReference type="Pfam" id="PF02874">
    <property type="entry name" value="ATP-synt_ab_N"/>
    <property type="match status" value="1"/>
</dbReference>
<dbReference type="Pfam" id="PF22919">
    <property type="entry name" value="ATP-synt_VA_C"/>
    <property type="match status" value="1"/>
</dbReference>
<dbReference type="SMART" id="SM00382">
    <property type="entry name" value="AAA"/>
    <property type="match status" value="1"/>
</dbReference>
<dbReference type="SUPFAM" id="SSF47917">
    <property type="entry name" value="C-terminal domain of alpha and beta subunits of F1 ATP synthase"/>
    <property type="match status" value="1"/>
</dbReference>
<dbReference type="SUPFAM" id="SSF50615">
    <property type="entry name" value="N-terminal domain of alpha and beta subunits of F1 ATP synthase"/>
    <property type="match status" value="1"/>
</dbReference>
<dbReference type="SUPFAM" id="SSF52540">
    <property type="entry name" value="P-loop containing nucleoside triphosphate hydrolases"/>
    <property type="match status" value="1"/>
</dbReference>
<dbReference type="PROSITE" id="PS00152">
    <property type="entry name" value="ATPASE_ALPHA_BETA"/>
    <property type="match status" value="1"/>
</dbReference>